<dbReference type="EMBL" id="AE016825">
    <property type="protein sequence ID" value="AAQ61409.1"/>
    <property type="molecule type" value="Genomic_DNA"/>
</dbReference>
<dbReference type="RefSeq" id="WP_011137294.1">
    <property type="nucleotide sequence ID" value="NC_005085.1"/>
</dbReference>
<dbReference type="SMR" id="Q7NRN3"/>
<dbReference type="STRING" id="243365.CV_3747"/>
<dbReference type="GeneID" id="97480702"/>
<dbReference type="KEGG" id="cvi:CV_3747"/>
<dbReference type="eggNOG" id="COG0268">
    <property type="taxonomic scope" value="Bacteria"/>
</dbReference>
<dbReference type="HOGENOM" id="CLU_160655_4_0_4"/>
<dbReference type="OrthoDB" id="9807974at2"/>
<dbReference type="Proteomes" id="UP000001424">
    <property type="component" value="Chromosome"/>
</dbReference>
<dbReference type="GO" id="GO:0005829">
    <property type="term" value="C:cytosol"/>
    <property type="evidence" value="ECO:0007669"/>
    <property type="project" value="TreeGrafter"/>
</dbReference>
<dbReference type="GO" id="GO:0015935">
    <property type="term" value="C:small ribosomal subunit"/>
    <property type="evidence" value="ECO:0007669"/>
    <property type="project" value="TreeGrafter"/>
</dbReference>
<dbReference type="GO" id="GO:0070181">
    <property type="term" value="F:small ribosomal subunit rRNA binding"/>
    <property type="evidence" value="ECO:0007669"/>
    <property type="project" value="TreeGrafter"/>
</dbReference>
<dbReference type="GO" id="GO:0003735">
    <property type="term" value="F:structural constituent of ribosome"/>
    <property type="evidence" value="ECO:0007669"/>
    <property type="project" value="InterPro"/>
</dbReference>
<dbReference type="GO" id="GO:0006412">
    <property type="term" value="P:translation"/>
    <property type="evidence" value="ECO:0007669"/>
    <property type="project" value="UniProtKB-UniRule"/>
</dbReference>
<dbReference type="FunFam" id="1.20.58.110:FF:000001">
    <property type="entry name" value="30S ribosomal protein S20"/>
    <property type="match status" value="1"/>
</dbReference>
<dbReference type="Gene3D" id="1.20.58.110">
    <property type="entry name" value="Ribosomal protein S20"/>
    <property type="match status" value="1"/>
</dbReference>
<dbReference type="HAMAP" id="MF_00500">
    <property type="entry name" value="Ribosomal_bS20"/>
    <property type="match status" value="1"/>
</dbReference>
<dbReference type="InterPro" id="IPR002583">
    <property type="entry name" value="Ribosomal_bS20"/>
</dbReference>
<dbReference type="InterPro" id="IPR036510">
    <property type="entry name" value="Ribosomal_bS20_sf"/>
</dbReference>
<dbReference type="NCBIfam" id="TIGR00029">
    <property type="entry name" value="S20"/>
    <property type="match status" value="1"/>
</dbReference>
<dbReference type="PANTHER" id="PTHR33398">
    <property type="entry name" value="30S RIBOSOMAL PROTEIN S20"/>
    <property type="match status" value="1"/>
</dbReference>
<dbReference type="PANTHER" id="PTHR33398:SF1">
    <property type="entry name" value="SMALL RIBOSOMAL SUBUNIT PROTEIN BS20C"/>
    <property type="match status" value="1"/>
</dbReference>
<dbReference type="Pfam" id="PF01649">
    <property type="entry name" value="Ribosomal_S20p"/>
    <property type="match status" value="1"/>
</dbReference>
<dbReference type="SUPFAM" id="SSF46992">
    <property type="entry name" value="Ribosomal protein S20"/>
    <property type="match status" value="1"/>
</dbReference>
<proteinExistence type="inferred from homology"/>
<organism>
    <name type="scientific">Chromobacterium violaceum (strain ATCC 12472 / DSM 30191 / JCM 1249 / CCUG 213 / NBRC 12614 / NCIMB 9131 / NCTC 9757 / MK)</name>
    <dbReference type="NCBI Taxonomy" id="243365"/>
    <lineage>
        <taxon>Bacteria</taxon>
        <taxon>Pseudomonadati</taxon>
        <taxon>Pseudomonadota</taxon>
        <taxon>Betaproteobacteria</taxon>
        <taxon>Neisseriales</taxon>
        <taxon>Chromobacteriaceae</taxon>
        <taxon>Chromobacterium</taxon>
    </lineage>
</organism>
<protein>
    <recommendedName>
        <fullName evidence="1">Small ribosomal subunit protein bS20</fullName>
    </recommendedName>
    <alternativeName>
        <fullName evidence="3">30S ribosomal protein S20</fullName>
    </alternativeName>
</protein>
<sequence length="87" mass="9537">MANSAQARKRARTALKQRAHNASLRTAFRTAVKKVLKAIEAGDKAAARVVFQASEKVIDRIADKGVFHKNKAARHKSRLSAQIKAMA</sequence>
<reference key="1">
    <citation type="journal article" date="2003" name="Proc. Natl. Acad. Sci. U.S.A.">
        <title>The complete genome sequence of Chromobacterium violaceum reveals remarkable and exploitable bacterial adaptability.</title>
        <authorList>
            <person name="Vasconcelos A.T.R."/>
            <person name="de Almeida D.F."/>
            <person name="Hungria M."/>
            <person name="Guimaraes C.T."/>
            <person name="Antonio R.V."/>
            <person name="Almeida F.C."/>
            <person name="de Almeida L.G.P."/>
            <person name="de Almeida R."/>
            <person name="Alves-Gomes J.A."/>
            <person name="Andrade E.M."/>
            <person name="Araripe J."/>
            <person name="de Araujo M.F.F."/>
            <person name="Astolfi-Filho S."/>
            <person name="Azevedo V."/>
            <person name="Baptista A.J."/>
            <person name="Bataus L.A.M."/>
            <person name="Batista J.S."/>
            <person name="Belo A."/>
            <person name="van den Berg C."/>
            <person name="Bogo M."/>
            <person name="Bonatto S."/>
            <person name="Bordignon J."/>
            <person name="Brigido M.M."/>
            <person name="Brito C.A."/>
            <person name="Brocchi M."/>
            <person name="Burity H.A."/>
            <person name="Camargo A.A."/>
            <person name="Cardoso D.D.P."/>
            <person name="Carneiro N.P."/>
            <person name="Carraro D.M."/>
            <person name="Carvalho C.M.B."/>
            <person name="Cascardo J.C.M."/>
            <person name="Cavada B.S."/>
            <person name="Chueire L.M.O."/>
            <person name="Creczynski-Pasa T.B."/>
            <person name="Cunha-Junior N.C."/>
            <person name="Fagundes N."/>
            <person name="Falcao C.L."/>
            <person name="Fantinatti F."/>
            <person name="Farias I.P."/>
            <person name="Felipe M.S.S."/>
            <person name="Ferrari L.P."/>
            <person name="Ferro J.A."/>
            <person name="Ferro M.I.T."/>
            <person name="Franco G.R."/>
            <person name="Freitas N.S.A."/>
            <person name="Furlan L.R."/>
            <person name="Gazzinelli R.T."/>
            <person name="Gomes E.A."/>
            <person name="Goncalves P.R."/>
            <person name="Grangeiro T.B."/>
            <person name="Grattapaglia D."/>
            <person name="Grisard E.C."/>
            <person name="Hanna E.S."/>
            <person name="Jardim S.N."/>
            <person name="Laurino J."/>
            <person name="Leoi L.C.T."/>
            <person name="Lima L.F.A."/>
            <person name="Loureiro M.F."/>
            <person name="Lyra M.C.C.P."/>
            <person name="Madeira H.M.F."/>
            <person name="Manfio G.P."/>
            <person name="Maranhao A.Q."/>
            <person name="Martins W.S."/>
            <person name="di Mauro S.M.Z."/>
            <person name="de Medeiros S.R.B."/>
            <person name="Meissner R.V."/>
            <person name="Moreira M.A.M."/>
            <person name="Nascimento F.F."/>
            <person name="Nicolas M.F."/>
            <person name="Oliveira J.G."/>
            <person name="Oliveira S.C."/>
            <person name="Paixao R.F.C."/>
            <person name="Parente J.A."/>
            <person name="Pedrosa F.O."/>
            <person name="Pena S.D.J."/>
            <person name="Pereira J.O."/>
            <person name="Pereira M."/>
            <person name="Pinto L.S.R.C."/>
            <person name="Pinto L.S."/>
            <person name="Porto J.I.R."/>
            <person name="Potrich D.P."/>
            <person name="Ramalho-Neto C.E."/>
            <person name="Reis A.M.M."/>
            <person name="Rigo L.U."/>
            <person name="Rondinelli E."/>
            <person name="Santos E.B.P."/>
            <person name="Santos F.R."/>
            <person name="Schneider M.P.C."/>
            <person name="Seuanez H.N."/>
            <person name="Silva A.M.R."/>
            <person name="da Silva A.L.C."/>
            <person name="Silva D.W."/>
            <person name="Silva R."/>
            <person name="Simoes I.C."/>
            <person name="Simon D."/>
            <person name="Soares C.M.A."/>
            <person name="Soares R.B.A."/>
            <person name="Souza E.M."/>
            <person name="Souza K.R.L."/>
            <person name="Souza R.C."/>
            <person name="Steffens M.B.R."/>
            <person name="Steindel M."/>
            <person name="Teixeira S.R."/>
            <person name="Urmenyi T."/>
            <person name="Vettore A."/>
            <person name="Wassem R."/>
            <person name="Zaha A."/>
            <person name="Simpson A.J.G."/>
        </authorList>
    </citation>
    <scope>NUCLEOTIDE SEQUENCE [LARGE SCALE GENOMIC DNA]</scope>
    <source>
        <strain>ATCC 12472 / DSM 30191 / JCM 1249 / CCUG 213 / NBRC 12614 / NCIMB 9131 / NCTC 9757 / MK</strain>
    </source>
</reference>
<feature type="chain" id="PRO_0000167948" description="Small ribosomal subunit protein bS20">
    <location>
        <begin position="1"/>
        <end position="87"/>
    </location>
</feature>
<feature type="region of interest" description="Disordered" evidence="2">
    <location>
        <begin position="1"/>
        <end position="20"/>
    </location>
</feature>
<feature type="compositionally biased region" description="Basic residues" evidence="2">
    <location>
        <begin position="7"/>
        <end position="19"/>
    </location>
</feature>
<evidence type="ECO:0000255" key="1">
    <source>
        <dbReference type="HAMAP-Rule" id="MF_00500"/>
    </source>
</evidence>
<evidence type="ECO:0000256" key="2">
    <source>
        <dbReference type="SAM" id="MobiDB-lite"/>
    </source>
</evidence>
<evidence type="ECO:0000305" key="3"/>
<keyword id="KW-1185">Reference proteome</keyword>
<keyword id="KW-0687">Ribonucleoprotein</keyword>
<keyword id="KW-0689">Ribosomal protein</keyword>
<keyword id="KW-0694">RNA-binding</keyword>
<keyword id="KW-0699">rRNA-binding</keyword>
<gene>
    <name evidence="1" type="primary">rpsT</name>
    <name type="ordered locus">CV_3747</name>
</gene>
<accession>Q7NRN3</accession>
<name>RS20_CHRVO</name>
<comment type="function">
    <text evidence="1">Binds directly to 16S ribosomal RNA.</text>
</comment>
<comment type="similarity">
    <text evidence="1">Belongs to the bacterial ribosomal protein bS20 family.</text>
</comment>